<dbReference type="EC" id="1.1.5.4" evidence="1"/>
<dbReference type="EMBL" id="CP000379">
    <property type="protein sequence ID" value="ABF79867.1"/>
    <property type="molecule type" value="Genomic_DNA"/>
</dbReference>
<dbReference type="SMR" id="Q1BKI8"/>
<dbReference type="HOGENOM" id="CLU_028151_0_0_4"/>
<dbReference type="UniPathway" id="UPA00223">
    <property type="reaction ID" value="UER01008"/>
</dbReference>
<dbReference type="GO" id="GO:0047545">
    <property type="term" value="F:2-hydroxyglutarate dehydrogenase activity"/>
    <property type="evidence" value="ECO:0007669"/>
    <property type="project" value="TreeGrafter"/>
</dbReference>
<dbReference type="GO" id="GO:0008924">
    <property type="term" value="F:L-malate dehydrogenase (quinone) activity"/>
    <property type="evidence" value="ECO:0007669"/>
    <property type="project" value="UniProtKB-UniRule"/>
</dbReference>
<dbReference type="GO" id="GO:0006099">
    <property type="term" value="P:tricarboxylic acid cycle"/>
    <property type="evidence" value="ECO:0007669"/>
    <property type="project" value="UniProtKB-UniRule"/>
</dbReference>
<dbReference type="HAMAP" id="MF_00212">
    <property type="entry name" value="MQO"/>
    <property type="match status" value="1"/>
</dbReference>
<dbReference type="InterPro" id="IPR036188">
    <property type="entry name" value="FAD/NAD-bd_sf"/>
</dbReference>
<dbReference type="InterPro" id="IPR006231">
    <property type="entry name" value="MQO"/>
</dbReference>
<dbReference type="NCBIfam" id="TIGR01320">
    <property type="entry name" value="mal_quin_oxido"/>
    <property type="match status" value="1"/>
</dbReference>
<dbReference type="NCBIfam" id="NF003603">
    <property type="entry name" value="PRK05257.1-1"/>
    <property type="match status" value="1"/>
</dbReference>
<dbReference type="NCBIfam" id="NF003605">
    <property type="entry name" value="PRK05257.1-4"/>
    <property type="match status" value="1"/>
</dbReference>
<dbReference type="NCBIfam" id="NF003606">
    <property type="entry name" value="PRK05257.2-1"/>
    <property type="match status" value="1"/>
</dbReference>
<dbReference type="NCBIfam" id="NF003609">
    <property type="entry name" value="PRK05257.2-5"/>
    <property type="match status" value="1"/>
</dbReference>
<dbReference type="NCBIfam" id="NF003611">
    <property type="entry name" value="PRK05257.3-2"/>
    <property type="match status" value="1"/>
</dbReference>
<dbReference type="NCBIfam" id="NF009875">
    <property type="entry name" value="PRK13339.1"/>
    <property type="match status" value="1"/>
</dbReference>
<dbReference type="PANTHER" id="PTHR43104">
    <property type="entry name" value="L-2-HYDROXYGLUTARATE DEHYDROGENASE, MITOCHONDRIAL"/>
    <property type="match status" value="1"/>
</dbReference>
<dbReference type="PANTHER" id="PTHR43104:SF2">
    <property type="entry name" value="L-2-HYDROXYGLUTARATE DEHYDROGENASE, MITOCHONDRIAL"/>
    <property type="match status" value="1"/>
</dbReference>
<dbReference type="Pfam" id="PF06039">
    <property type="entry name" value="Mqo"/>
    <property type="match status" value="1"/>
</dbReference>
<dbReference type="SUPFAM" id="SSF51905">
    <property type="entry name" value="FAD/NAD(P)-binding domain"/>
    <property type="match status" value="1"/>
</dbReference>
<sequence length="553" mass="60584">MKKGSAVIKTLRVILSALALCVATSSAHAADTKKVDVLLVGGGIMSSTLGVWLHELQPNWSMTMVERLDGVALESSNGWNNAGTGHSALAELNYTPEKADGKVDISKAIEINESFQISRQFWAWQVKQGVLKNPHSFINSTPHMSFVWGDDNVRFLKKRYEALQASPLFRGMQYSEDYDQIKQWVPLMMEGRDRNQKVAATWTPIGTDVNFGEITRQFVGYLKTQPNFTLSLSSEVREITRNADGTWHVSWVKLHSDEPPQSVDAKFVFIGAGGGALHLLQASGIPEAKDYGAFPVGGSFLVTDNPEVVKQHLAKAYGKASVGSPPMSVPHLDTRIIDGKKIILFGPFATFSTKFLKNGSYFDLAKSTNLHNVAPMMRVGVDEFPLVQYLAGQLMLTDDDRFNALKEYFPNAKKEDWRLWQAGQRVQIIKRDPVKGGVLKLGTEIVASQDGSIAGLLGASPGASTAAPIMLNLMQKVFKDKVATPEWQQKIRQIVPSYGTKLNDSPAKVVEEWTYTSDVLQLSPPPKIDLGAPSQATGNAPARPAKASADMAL</sequence>
<comment type="catalytic activity">
    <reaction evidence="1">
        <text>(S)-malate + a quinone = a quinol + oxaloacetate</text>
        <dbReference type="Rhea" id="RHEA:46012"/>
        <dbReference type="ChEBI" id="CHEBI:15589"/>
        <dbReference type="ChEBI" id="CHEBI:16452"/>
        <dbReference type="ChEBI" id="CHEBI:24646"/>
        <dbReference type="ChEBI" id="CHEBI:132124"/>
        <dbReference type="EC" id="1.1.5.4"/>
    </reaction>
</comment>
<comment type="cofactor">
    <cofactor evidence="1">
        <name>FAD</name>
        <dbReference type="ChEBI" id="CHEBI:57692"/>
    </cofactor>
</comment>
<comment type="pathway">
    <text evidence="1">Carbohydrate metabolism; tricarboxylic acid cycle; oxaloacetate from (S)-malate (quinone route): step 1/1.</text>
</comment>
<comment type="similarity">
    <text evidence="1">Belongs to the MQO family.</text>
</comment>
<organism>
    <name type="scientific">Burkholderia orbicola (strain AU 1054)</name>
    <dbReference type="NCBI Taxonomy" id="331271"/>
    <lineage>
        <taxon>Bacteria</taxon>
        <taxon>Pseudomonadati</taxon>
        <taxon>Pseudomonadota</taxon>
        <taxon>Betaproteobacteria</taxon>
        <taxon>Burkholderiales</taxon>
        <taxon>Burkholderiaceae</taxon>
        <taxon>Burkholderia</taxon>
        <taxon>Burkholderia cepacia complex</taxon>
        <taxon>Burkholderia orbicola</taxon>
    </lineage>
</organism>
<keyword id="KW-0274">FAD</keyword>
<keyword id="KW-0285">Flavoprotein</keyword>
<keyword id="KW-0560">Oxidoreductase</keyword>
<keyword id="KW-0816">Tricarboxylic acid cycle</keyword>
<accession>Q1BKI8</accession>
<protein>
    <recommendedName>
        <fullName evidence="1">Probable malate:quinone oxidoreductase</fullName>
        <ecNumber evidence="1">1.1.5.4</ecNumber>
    </recommendedName>
    <alternativeName>
        <fullName evidence="1">MQO</fullName>
    </alternativeName>
    <alternativeName>
        <fullName evidence="1">Malate dehydrogenase [quinone]</fullName>
    </alternativeName>
</protein>
<name>MQO_BURO1</name>
<reference key="1">
    <citation type="submission" date="2006-05" db="EMBL/GenBank/DDBJ databases">
        <title>Complete sequence of chromosome 2 of Burkholderia cenocepacia AU 1054.</title>
        <authorList>
            <consortium name="US DOE Joint Genome Institute"/>
            <person name="Copeland A."/>
            <person name="Lucas S."/>
            <person name="Lapidus A."/>
            <person name="Barry K."/>
            <person name="Detter J.C."/>
            <person name="Glavina del Rio T."/>
            <person name="Hammon N."/>
            <person name="Israni S."/>
            <person name="Dalin E."/>
            <person name="Tice H."/>
            <person name="Pitluck S."/>
            <person name="Chain P."/>
            <person name="Malfatti S."/>
            <person name="Shin M."/>
            <person name="Vergez L."/>
            <person name="Schmutz J."/>
            <person name="Larimer F."/>
            <person name="Land M."/>
            <person name="Hauser L."/>
            <person name="Kyrpides N."/>
            <person name="Lykidis A."/>
            <person name="LiPuma J.J."/>
            <person name="Konstantinidis K."/>
            <person name="Tiedje J.M."/>
            <person name="Richardson P."/>
        </authorList>
    </citation>
    <scope>NUCLEOTIDE SEQUENCE [LARGE SCALE GENOMIC DNA]</scope>
    <source>
        <strain>AU 1054</strain>
    </source>
</reference>
<proteinExistence type="inferred from homology"/>
<feature type="chain" id="PRO_0000325489" description="Probable malate:quinone oxidoreductase">
    <location>
        <begin position="1"/>
        <end position="553"/>
    </location>
</feature>
<feature type="region of interest" description="Disordered" evidence="2">
    <location>
        <begin position="524"/>
        <end position="553"/>
    </location>
</feature>
<gene>
    <name evidence="1" type="primary">mqo</name>
    <name type="ordered locus">Bcen_4992</name>
</gene>
<evidence type="ECO:0000255" key="1">
    <source>
        <dbReference type="HAMAP-Rule" id="MF_00212"/>
    </source>
</evidence>
<evidence type="ECO:0000256" key="2">
    <source>
        <dbReference type="SAM" id="MobiDB-lite"/>
    </source>
</evidence>